<keyword id="KW-0025">Alternative splicing</keyword>
<keyword id="KW-1003">Cell membrane</keyword>
<keyword id="KW-1015">Disulfide bond</keyword>
<keyword id="KW-0325">Glycoprotein</keyword>
<keyword id="KW-0472">Membrane</keyword>
<keyword id="KW-1185">Reference proteome</keyword>
<keyword id="KW-0812">Transmembrane</keyword>
<keyword id="KW-1133">Transmembrane helix</keyword>
<protein>
    <recommendedName>
        <fullName evidence="8">Tetraspanin-17</fullName>
        <shortName>Tspan-17</shortName>
    </recommendedName>
    <alternativeName>
        <fullName>F-box only protein 23</fullName>
    </alternativeName>
    <alternativeName>
        <fullName>Tetraspan protein SB134</fullName>
    </alternativeName>
    <alternativeName>
        <fullName>Transmembrane 4 superfamily member 17</fullName>
    </alternativeName>
</protein>
<organism>
    <name type="scientific">Homo sapiens</name>
    <name type="common">Human</name>
    <dbReference type="NCBI Taxonomy" id="9606"/>
    <lineage>
        <taxon>Eukaryota</taxon>
        <taxon>Metazoa</taxon>
        <taxon>Chordata</taxon>
        <taxon>Craniata</taxon>
        <taxon>Vertebrata</taxon>
        <taxon>Euteleostomi</taxon>
        <taxon>Mammalia</taxon>
        <taxon>Eutheria</taxon>
        <taxon>Euarchontoglires</taxon>
        <taxon>Primates</taxon>
        <taxon>Haplorrhini</taxon>
        <taxon>Catarrhini</taxon>
        <taxon>Hominidae</taxon>
        <taxon>Homo</taxon>
    </lineage>
</organism>
<gene>
    <name evidence="9" type="primary">TSPAN17</name>
    <name type="synonym">FBXO23</name>
    <name type="synonym">TM4SF17</name>
</gene>
<accession>Q96FV3</accession>
<accession>Q6NXF7</accession>
<accession>Q96S98</accession>
<accession>Q9UKB9</accession>
<sequence length="270" mass="30264">MPGKHQHFQEPEVGCCGKYFLFGFNIVFWVLGALFLAIGLWAWGEKGVLSNISALTDLGGLDPVWLFVVVGGVMSVLGFAGCIGALRENTFLLKFFSVFLGLIFFLELATGILAFVFKDWIRDQLNLFINNNVKAYRDDIDLQNLIDFAQEYWSCCGARGPNDWNLNIYFNCTDLNPSRERCGVPFSCCVRDPAEDVLNTQCGYDVRLKLELEQQGFIHTKGCVGQFEKWLQDNLIVVAGVFMGIALLQIFGICLAQNLVSDIKAVKANW</sequence>
<proteinExistence type="evidence at transcript level"/>
<dbReference type="EMBL" id="AY037146">
    <property type="protein sequence ID" value="AAK67627.1"/>
    <property type="molecule type" value="mRNA"/>
</dbReference>
<dbReference type="EMBL" id="AC091934">
    <property type="status" value="NOT_ANNOTATED_CDS"/>
    <property type="molecule type" value="Genomic_DNA"/>
</dbReference>
<dbReference type="EMBL" id="BC010405">
    <property type="protein sequence ID" value="AAH10405.1"/>
    <property type="molecule type" value="mRNA"/>
</dbReference>
<dbReference type="EMBL" id="BC067105">
    <property type="protein sequence ID" value="AAH67105.1"/>
    <property type="molecule type" value="mRNA"/>
</dbReference>
<dbReference type="EMBL" id="AF174603">
    <property type="protein sequence ID" value="AAF04524.1"/>
    <property type="status" value="ALT_FRAME"/>
    <property type="molecule type" value="mRNA"/>
</dbReference>
<dbReference type="CCDS" id="CCDS47346.2">
    <molecule id="Q96FV3-3"/>
</dbReference>
<dbReference type="CCDS" id="CCDS54952.1">
    <molecule id="Q96FV3-4"/>
</dbReference>
<dbReference type="RefSeq" id="NP_001006617.2">
    <molecule id="Q96FV3-3"/>
    <property type="nucleotide sequence ID" value="NM_001006616.3"/>
</dbReference>
<dbReference type="RefSeq" id="NP_569732.2">
    <molecule id="Q96FV3-4"/>
    <property type="nucleotide sequence ID" value="NM_130465.5"/>
</dbReference>
<dbReference type="SMR" id="Q96FV3"/>
<dbReference type="BioGRID" id="117648">
    <property type="interactions" value="77"/>
</dbReference>
<dbReference type="ComplexPortal" id="CPX-8108">
    <property type="entry name" value="SCF E3 ubiquitin ligase complex, TSPAN17 variant"/>
</dbReference>
<dbReference type="FunCoup" id="Q96FV3">
    <property type="interactions" value="38"/>
</dbReference>
<dbReference type="IntAct" id="Q96FV3">
    <property type="interactions" value="58"/>
</dbReference>
<dbReference type="STRING" id="9606.ENSP00000309036"/>
<dbReference type="GlyCosmos" id="Q96FV3">
    <property type="glycosylation" value="2 sites, No reported glycans"/>
</dbReference>
<dbReference type="GlyGen" id="Q96FV3">
    <property type="glycosylation" value="2 sites"/>
</dbReference>
<dbReference type="iPTMnet" id="Q96FV3"/>
<dbReference type="BioMuta" id="TSPAN17"/>
<dbReference type="DMDM" id="147744595"/>
<dbReference type="MassIVE" id="Q96FV3"/>
<dbReference type="PaxDb" id="9606-ENSP00000309036"/>
<dbReference type="PeptideAtlas" id="Q96FV3"/>
<dbReference type="ProteomicsDB" id="76560">
    <molecule id="Q96FV3-1"/>
</dbReference>
<dbReference type="ProteomicsDB" id="76562">
    <molecule id="Q96FV3-3"/>
</dbReference>
<dbReference type="ProteomicsDB" id="76563">
    <molecule id="Q96FV3-4"/>
</dbReference>
<dbReference type="Antibodypedia" id="29134">
    <property type="antibodies" value="91 antibodies from 22 providers"/>
</dbReference>
<dbReference type="DNASU" id="26262"/>
<dbReference type="Ensembl" id="ENST00000298564.14">
    <molecule id="Q96FV3-2"/>
    <property type="protein sequence ID" value="ENSP00000298564.10"/>
    <property type="gene ID" value="ENSG00000048140.18"/>
</dbReference>
<dbReference type="Ensembl" id="ENST00000508164.6">
    <molecule id="Q96FV3-4"/>
    <property type="protein sequence ID" value="ENSP00000422053.1"/>
    <property type="gene ID" value="ENSG00000048140.18"/>
</dbReference>
<dbReference type="Ensembl" id="ENST00000515708.5">
    <molecule id="Q96FV3-3"/>
    <property type="protein sequence ID" value="ENSP00000426650.1"/>
    <property type="gene ID" value="ENSG00000048140.18"/>
</dbReference>
<dbReference type="GeneID" id="26262"/>
<dbReference type="KEGG" id="hsa:26262"/>
<dbReference type="MANE-Select" id="ENST00000508164.6">
    <molecule id="Q96FV3-4"/>
    <property type="protein sequence ID" value="ENSP00000422053.1"/>
    <property type="RefSeq nucleotide sequence ID" value="NM_130465.5"/>
    <property type="RefSeq protein sequence ID" value="NP_569732.2"/>
</dbReference>
<dbReference type="UCSC" id="uc003mes.4">
    <molecule id="Q96FV3-1"/>
    <property type="organism name" value="human"/>
</dbReference>
<dbReference type="AGR" id="HGNC:13594"/>
<dbReference type="CTD" id="26262"/>
<dbReference type="DisGeNET" id="26262"/>
<dbReference type="GeneCards" id="TSPAN17"/>
<dbReference type="HGNC" id="HGNC:13594">
    <property type="gene designation" value="TSPAN17"/>
</dbReference>
<dbReference type="HPA" id="ENSG00000048140">
    <property type="expression patterns" value="Low tissue specificity"/>
</dbReference>
<dbReference type="MIM" id="620446">
    <property type="type" value="gene"/>
</dbReference>
<dbReference type="neXtProt" id="NX_Q96FV3"/>
<dbReference type="OpenTargets" id="ENSG00000048140"/>
<dbReference type="PharmGKB" id="PA128394740"/>
<dbReference type="VEuPathDB" id="HostDB:ENSG00000048140"/>
<dbReference type="eggNOG" id="KOG3882">
    <property type="taxonomic scope" value="Eukaryota"/>
</dbReference>
<dbReference type="GeneTree" id="ENSGT00940000155429"/>
<dbReference type="InParanoid" id="Q96FV3"/>
<dbReference type="OMA" id="DWNPSRE"/>
<dbReference type="OrthoDB" id="2014092at2759"/>
<dbReference type="PAN-GO" id="Q96FV3">
    <property type="GO annotations" value="3 GO annotations based on evolutionary models"/>
</dbReference>
<dbReference type="PhylomeDB" id="Q96FV3"/>
<dbReference type="PathwayCommons" id="Q96FV3"/>
<dbReference type="SignaLink" id="Q96FV3"/>
<dbReference type="BioGRID-ORCS" id="26262">
    <property type="hits" value="16 hits in 1161 CRISPR screens"/>
</dbReference>
<dbReference type="ChiTaRS" id="TSPAN17">
    <property type="organism name" value="human"/>
</dbReference>
<dbReference type="GenomeRNAi" id="26262"/>
<dbReference type="Pharos" id="Q96FV3">
    <property type="development level" value="Tdark"/>
</dbReference>
<dbReference type="PRO" id="PR:Q96FV3"/>
<dbReference type="Proteomes" id="UP000005640">
    <property type="component" value="Chromosome 5"/>
</dbReference>
<dbReference type="RNAct" id="Q96FV3">
    <property type="molecule type" value="protein"/>
</dbReference>
<dbReference type="Bgee" id="ENSG00000048140">
    <property type="expression patterns" value="Expressed in right adrenal gland and 185 other cell types or tissues"/>
</dbReference>
<dbReference type="ExpressionAtlas" id="Q96FV3">
    <property type="expression patterns" value="baseline and differential"/>
</dbReference>
<dbReference type="GO" id="GO:0005886">
    <property type="term" value="C:plasma membrane"/>
    <property type="evidence" value="ECO:0000318"/>
    <property type="project" value="GO_Central"/>
</dbReference>
<dbReference type="GO" id="GO:0019899">
    <property type="term" value="F:enzyme binding"/>
    <property type="evidence" value="ECO:0000353"/>
    <property type="project" value="UniProtKB"/>
</dbReference>
<dbReference type="GO" id="GO:0072594">
    <property type="term" value="P:establishment of protein localization to organelle"/>
    <property type="evidence" value="ECO:0000314"/>
    <property type="project" value="UniProtKB"/>
</dbReference>
<dbReference type="GO" id="GO:0051043">
    <property type="term" value="P:regulation of membrane protein ectodomain proteolysis"/>
    <property type="evidence" value="ECO:0000314"/>
    <property type="project" value="UniProtKB"/>
</dbReference>
<dbReference type="CDD" id="cd03159">
    <property type="entry name" value="TM4SF9_like_LEL"/>
    <property type="match status" value="1"/>
</dbReference>
<dbReference type="FunFam" id="1.10.1450.10:FF:000001">
    <property type="entry name" value="Tetraspanin"/>
    <property type="match status" value="1"/>
</dbReference>
<dbReference type="Gene3D" id="1.10.1450.10">
    <property type="entry name" value="Tetraspanin"/>
    <property type="match status" value="1"/>
</dbReference>
<dbReference type="InterPro" id="IPR018499">
    <property type="entry name" value="Tetraspanin/Peripherin"/>
</dbReference>
<dbReference type="InterPro" id="IPR000301">
    <property type="entry name" value="Tetraspanin_animals"/>
</dbReference>
<dbReference type="InterPro" id="IPR018503">
    <property type="entry name" value="Tetraspanin_CS"/>
</dbReference>
<dbReference type="InterPro" id="IPR008952">
    <property type="entry name" value="Tetraspanin_EC2_sf"/>
</dbReference>
<dbReference type="PANTHER" id="PTHR19282">
    <property type="entry name" value="TETRASPANIN"/>
    <property type="match status" value="1"/>
</dbReference>
<dbReference type="PANTHER" id="PTHR19282:SF470">
    <property type="entry name" value="TETRASPANIN-17"/>
    <property type="match status" value="1"/>
</dbReference>
<dbReference type="Pfam" id="PF00335">
    <property type="entry name" value="Tetraspanin"/>
    <property type="match status" value="1"/>
</dbReference>
<dbReference type="PIRSF" id="PIRSF002419">
    <property type="entry name" value="Tetraspanin"/>
    <property type="match status" value="1"/>
</dbReference>
<dbReference type="PRINTS" id="PR00259">
    <property type="entry name" value="TMFOUR"/>
</dbReference>
<dbReference type="SUPFAM" id="SSF48652">
    <property type="entry name" value="Tetraspanin"/>
    <property type="match status" value="1"/>
</dbReference>
<dbReference type="PROSITE" id="PS00421">
    <property type="entry name" value="TM4_1"/>
    <property type="match status" value="1"/>
</dbReference>
<reference key="1">
    <citation type="submission" date="2001-05" db="EMBL/GenBank/DDBJ databases">
        <authorList>
            <person name="Zhang W."/>
            <person name="Li N."/>
            <person name="Wan T."/>
            <person name="Cao X."/>
        </authorList>
    </citation>
    <scope>NUCLEOTIDE SEQUENCE [MRNA] (ISOFORM 3)</scope>
</reference>
<reference key="2">
    <citation type="journal article" date="2004" name="Nature">
        <title>The DNA sequence and comparative analysis of human chromosome 5.</title>
        <authorList>
            <person name="Schmutz J."/>
            <person name="Martin J."/>
            <person name="Terry A."/>
            <person name="Couronne O."/>
            <person name="Grimwood J."/>
            <person name="Lowry S."/>
            <person name="Gordon L.A."/>
            <person name="Scott D."/>
            <person name="Xie G."/>
            <person name="Huang W."/>
            <person name="Hellsten U."/>
            <person name="Tran-Gyamfi M."/>
            <person name="She X."/>
            <person name="Prabhakar S."/>
            <person name="Aerts A."/>
            <person name="Altherr M."/>
            <person name="Bajorek E."/>
            <person name="Black S."/>
            <person name="Branscomb E."/>
            <person name="Caoile C."/>
            <person name="Challacombe J.F."/>
            <person name="Chan Y.M."/>
            <person name="Denys M."/>
            <person name="Detter J.C."/>
            <person name="Escobar J."/>
            <person name="Flowers D."/>
            <person name="Fotopulos D."/>
            <person name="Glavina T."/>
            <person name="Gomez M."/>
            <person name="Gonzales E."/>
            <person name="Goodstein D."/>
            <person name="Grigoriev I."/>
            <person name="Groza M."/>
            <person name="Hammon N."/>
            <person name="Hawkins T."/>
            <person name="Haydu L."/>
            <person name="Israni S."/>
            <person name="Jett J."/>
            <person name="Kadner K."/>
            <person name="Kimball H."/>
            <person name="Kobayashi A."/>
            <person name="Lopez F."/>
            <person name="Lou Y."/>
            <person name="Martinez D."/>
            <person name="Medina C."/>
            <person name="Morgan J."/>
            <person name="Nandkeshwar R."/>
            <person name="Noonan J.P."/>
            <person name="Pitluck S."/>
            <person name="Pollard M."/>
            <person name="Predki P."/>
            <person name="Priest J."/>
            <person name="Ramirez L."/>
            <person name="Retterer J."/>
            <person name="Rodriguez A."/>
            <person name="Rogers S."/>
            <person name="Salamov A."/>
            <person name="Salazar A."/>
            <person name="Thayer N."/>
            <person name="Tice H."/>
            <person name="Tsai M."/>
            <person name="Ustaszewska A."/>
            <person name="Vo N."/>
            <person name="Wheeler J."/>
            <person name="Wu K."/>
            <person name="Yang J."/>
            <person name="Dickson M."/>
            <person name="Cheng J.-F."/>
            <person name="Eichler E.E."/>
            <person name="Olsen A."/>
            <person name="Pennacchio L.A."/>
            <person name="Rokhsar D.S."/>
            <person name="Richardson P."/>
            <person name="Lucas S.M."/>
            <person name="Myers R.M."/>
            <person name="Rubin E.M."/>
        </authorList>
    </citation>
    <scope>NUCLEOTIDE SEQUENCE [LARGE SCALE GENOMIC DNA]</scope>
</reference>
<reference key="3">
    <citation type="journal article" date="2004" name="Genome Res.">
        <title>The status, quality, and expansion of the NIH full-length cDNA project: the Mammalian Gene Collection (MGC).</title>
        <authorList>
            <consortium name="The MGC Project Team"/>
        </authorList>
    </citation>
    <scope>NUCLEOTIDE SEQUENCE [LARGE SCALE MRNA] (ISOFORMS 2 AND 4)</scope>
    <source>
        <tissue>Mammary gland</tissue>
        <tissue>Pancreas</tissue>
    </source>
</reference>
<reference key="4">
    <citation type="journal article" date="1999" name="Curr. Biol.">
        <title>Identification of a family of human F-box proteins.</title>
        <authorList>
            <person name="Cenciarelli C."/>
            <person name="Chiaur D.S."/>
            <person name="Guardavaccaro D."/>
            <person name="Parks W."/>
            <person name="Vidal M."/>
            <person name="Pagano M."/>
        </authorList>
    </citation>
    <scope>NUCLEOTIDE SEQUENCE [MRNA] OF 1-110 (ISOFORMS 1/3/4)</scope>
</reference>
<reference key="5">
    <citation type="journal article" date="2017" name="J. Immunol.">
        <title>ADAM10-Interacting Tetraspanins Tspan5 and Tspan17 Regulate VE-Cadherin Expression and Promote T Lymphocyte Transmigration.</title>
        <authorList>
            <person name="Reyat J.S."/>
            <person name="Chimen M."/>
            <person name="Noy P.J."/>
            <person name="Szyroka J."/>
            <person name="Rainger G.E."/>
            <person name="Tomlinson M.G."/>
        </authorList>
    </citation>
    <scope>FUNCTION</scope>
</reference>
<reference key="6">
    <citation type="journal article" date="2023" name="Cell">
        <title>Structural basis for membrane-proximal proteolysis of substrates by ADAM10.</title>
        <authorList>
            <person name="Lipper C.H."/>
            <person name="Egan E.D."/>
            <person name="Gabriel K.H."/>
            <person name="Blacklow S.C."/>
        </authorList>
    </citation>
    <scope>FUNCTION</scope>
</reference>
<evidence type="ECO:0000250" key="1">
    <source>
        <dbReference type="UniProtKB" id="O95858"/>
    </source>
</evidence>
<evidence type="ECO:0000250" key="2">
    <source>
        <dbReference type="UniProtKB" id="Q9D7W4"/>
    </source>
</evidence>
<evidence type="ECO:0000255" key="3"/>
<evidence type="ECO:0000269" key="4">
    <source>
    </source>
</evidence>
<evidence type="ECO:0000269" key="5">
    <source>
    </source>
</evidence>
<evidence type="ECO:0000303" key="6">
    <source>
    </source>
</evidence>
<evidence type="ECO:0000303" key="7">
    <source ref="1"/>
</evidence>
<evidence type="ECO:0000305" key="8"/>
<evidence type="ECO:0000312" key="9">
    <source>
        <dbReference type="HGNC" id="HGNC:13594"/>
    </source>
</evidence>
<name>TSN17_HUMAN</name>
<comment type="function">
    <text evidence="4 5">Part of TspanC8 subgroup, composed of 6 members that interact with the transmembrane metalloprotease ADAM10. This interaction is required for ADAM10 exit from the endoplasmic reticulum and for enzymatic maturation and trafficking to the cell surface as well as substrate specificity. Different TspanC8/ADAM10 complexes have distinct substrates (PubMed:28600292, PubMed:37516108). Seems to regulate VE-cadherin expression in endothelial cells probably through interaction with ADAM10, promoting leukocyte transmigration (PubMed:28600292).</text>
</comment>
<comment type="subunit">
    <text evidence="2">Interacts with ADAM10; the interaction influences ADAM10 substrate specificity, endocytosis and turnover.</text>
</comment>
<comment type="subcellular location">
    <subcellularLocation>
        <location evidence="2">Cell membrane</location>
        <topology evidence="3">Multi-pass membrane protein</topology>
    </subcellularLocation>
</comment>
<comment type="alternative products">
    <event type="alternative splicing"/>
    <isoform>
        <id>Q96FV3-1</id>
        <name>1</name>
        <sequence type="displayed"/>
    </isoform>
    <isoform>
        <id>Q96FV3-3</id>
        <name>2</name>
        <sequence type="described" ref="VSP_011391"/>
    </isoform>
    <isoform>
        <id>Q96FV3-2</id>
        <name>3</name>
        <sequence type="described" ref="VSP_011388 VSP_011389 VSP_011390"/>
    </isoform>
    <isoform>
        <id>Q96FV3-4</id>
        <name>4</name>
        <sequence type="described" ref="VSP_025608"/>
    </isoform>
</comment>
<comment type="similarity">
    <text evidence="8">Belongs to the tetraspanin (TM4SF) family.</text>
</comment>
<comment type="sequence caution" evidence="8">
    <conflict type="frameshift">
        <sequence resource="EMBL-CDS" id="AAF04524"/>
    </conflict>
</comment>
<feature type="chain" id="PRO_0000219265" description="Tetraspanin-17">
    <location>
        <begin position="1"/>
        <end position="270"/>
    </location>
</feature>
<feature type="topological domain" description="Cytoplasmic" evidence="3">
    <location>
        <begin position="1"/>
        <end position="19"/>
    </location>
</feature>
<feature type="transmembrane region" description="Helical" evidence="3">
    <location>
        <begin position="20"/>
        <end position="40"/>
    </location>
</feature>
<feature type="topological domain" description="Extracellular" evidence="3">
    <location>
        <begin position="41"/>
        <end position="63"/>
    </location>
</feature>
<feature type="transmembrane region" description="Helical" evidence="3">
    <location>
        <begin position="64"/>
        <end position="84"/>
    </location>
</feature>
<feature type="topological domain" description="Cytoplasmic" evidence="3">
    <location>
        <begin position="85"/>
        <end position="94"/>
    </location>
</feature>
<feature type="transmembrane region" description="Helical" evidence="3">
    <location>
        <begin position="95"/>
        <end position="115"/>
    </location>
</feature>
<feature type="topological domain" description="Extracellular" evidence="3">
    <location>
        <begin position="116"/>
        <end position="234"/>
    </location>
</feature>
<feature type="transmembrane region" description="Helical" evidence="3">
    <location>
        <begin position="235"/>
        <end position="255"/>
    </location>
</feature>
<feature type="topological domain" description="Cytoplasmic" evidence="3">
    <location>
        <begin position="256"/>
        <end position="270"/>
    </location>
</feature>
<feature type="glycosylation site" description="N-linked (GlcNAc...) asparagine" evidence="3">
    <location>
        <position position="51"/>
    </location>
</feature>
<feature type="glycosylation site" description="N-linked (GlcNAc...) asparagine" evidence="3">
    <location>
        <position position="171"/>
    </location>
</feature>
<feature type="disulfide bond" evidence="1">
    <location>
        <begin position="155"/>
        <end position="223"/>
    </location>
</feature>
<feature type="disulfide bond" evidence="1">
    <location>
        <begin position="156"/>
        <end position="188"/>
    </location>
</feature>
<feature type="disulfide bond" evidence="1">
    <location>
        <begin position="172"/>
        <end position="182"/>
    </location>
</feature>
<feature type="disulfide bond" evidence="1">
    <location>
        <begin position="189"/>
        <end position="202"/>
    </location>
</feature>
<feature type="splice variant" id="VSP_011388" description="In isoform 3." evidence="7">
    <location>
        <begin position="30"/>
        <end position="95"/>
    </location>
</feature>
<feature type="splice variant" id="VSP_011389" description="In isoform 3." evidence="7">
    <location>
        <begin position="153"/>
        <end position="194"/>
    </location>
</feature>
<feature type="splice variant" id="VSP_011390" description="In isoform 3." evidence="7">
    <original>Q</original>
    <variation>QVPLWPHVPLPLPGPPSLSPHLSSVLQ</variation>
    <location>
        <position position="249"/>
    </location>
</feature>
<feature type="splice variant" id="VSP_011391" description="In isoform 2." evidence="6">
    <original>VSDIKAVKANW</original>
    <variation>EQME</variation>
    <location>
        <begin position="260"/>
        <end position="270"/>
    </location>
</feature>
<feature type="splice variant" id="VSP_025608" description="In isoform 4." evidence="6">
    <original>W</original>
    <variation>WSKWNDDFENHWLTPTISEVLSTAGPQQNSLTGAPGPAPPSRHVFFGLGGLYPEPTFKNW</variation>
    <location>
        <position position="270"/>
    </location>
</feature>
<feature type="sequence variant" id="VAR_057278" description="In dbSNP:rs17624798.">
    <original>I</original>
    <variation>T</variation>
    <location>
        <position position="140"/>
    </location>
</feature>
<feature type="sequence conflict" description="In Ref. 1; AAK67627." evidence="8" ref="1">
    <original>A</original>
    <variation>P</variation>
    <location>
        <position position="239"/>
    </location>
</feature>